<evidence type="ECO:0000255" key="1">
    <source>
        <dbReference type="HAMAP-Rule" id="MF_00188"/>
    </source>
</evidence>
<feature type="chain" id="PRO_1000077477" description="Protease HtpX">
    <location>
        <begin position="1"/>
        <end position="293"/>
    </location>
</feature>
<feature type="transmembrane region" description="Helical" evidence="1">
    <location>
        <begin position="4"/>
        <end position="24"/>
    </location>
</feature>
<feature type="transmembrane region" description="Helical" evidence="1">
    <location>
        <begin position="34"/>
        <end position="54"/>
    </location>
</feature>
<feature type="transmembrane region" description="Helical" evidence="1">
    <location>
        <begin position="158"/>
        <end position="178"/>
    </location>
</feature>
<feature type="transmembrane region" description="Helical" evidence="1">
    <location>
        <begin position="193"/>
        <end position="213"/>
    </location>
</feature>
<feature type="active site" evidence="1">
    <location>
        <position position="140"/>
    </location>
</feature>
<feature type="binding site" evidence="1">
    <location>
        <position position="139"/>
    </location>
    <ligand>
        <name>Zn(2+)</name>
        <dbReference type="ChEBI" id="CHEBI:29105"/>
        <note>catalytic</note>
    </ligand>
</feature>
<feature type="binding site" evidence="1">
    <location>
        <position position="143"/>
    </location>
    <ligand>
        <name>Zn(2+)</name>
        <dbReference type="ChEBI" id="CHEBI:29105"/>
        <note>catalytic</note>
    </ligand>
</feature>
<feature type="binding site" evidence="1">
    <location>
        <position position="222"/>
    </location>
    <ligand>
        <name>Zn(2+)</name>
        <dbReference type="ChEBI" id="CHEBI:29105"/>
        <note>catalytic</note>
    </ligand>
</feature>
<name>HTPX_SALAR</name>
<accession>A9MNI0</accession>
<dbReference type="EC" id="3.4.24.-" evidence="1"/>
<dbReference type="EMBL" id="CP000880">
    <property type="protein sequence ID" value="ABX21003.1"/>
    <property type="molecule type" value="Genomic_DNA"/>
</dbReference>
<dbReference type="SMR" id="A9MNI0"/>
<dbReference type="STRING" id="41514.SARI_01097"/>
<dbReference type="MEROPS" id="M48.002"/>
<dbReference type="KEGG" id="ses:SARI_01097"/>
<dbReference type="HOGENOM" id="CLU_042266_1_0_6"/>
<dbReference type="Proteomes" id="UP000002084">
    <property type="component" value="Chromosome"/>
</dbReference>
<dbReference type="GO" id="GO:0005886">
    <property type="term" value="C:plasma membrane"/>
    <property type="evidence" value="ECO:0007669"/>
    <property type="project" value="UniProtKB-SubCell"/>
</dbReference>
<dbReference type="GO" id="GO:0004222">
    <property type="term" value="F:metalloendopeptidase activity"/>
    <property type="evidence" value="ECO:0007669"/>
    <property type="project" value="UniProtKB-UniRule"/>
</dbReference>
<dbReference type="GO" id="GO:0008270">
    <property type="term" value="F:zinc ion binding"/>
    <property type="evidence" value="ECO:0007669"/>
    <property type="project" value="UniProtKB-UniRule"/>
</dbReference>
<dbReference type="GO" id="GO:0006508">
    <property type="term" value="P:proteolysis"/>
    <property type="evidence" value="ECO:0007669"/>
    <property type="project" value="UniProtKB-KW"/>
</dbReference>
<dbReference type="CDD" id="cd07335">
    <property type="entry name" value="M48B_HtpX_like"/>
    <property type="match status" value="1"/>
</dbReference>
<dbReference type="FunFam" id="3.30.2010.10:FF:000001">
    <property type="entry name" value="Protease HtpX"/>
    <property type="match status" value="1"/>
</dbReference>
<dbReference type="Gene3D" id="3.30.2010.10">
    <property type="entry name" value="Metalloproteases ('zincins'), catalytic domain"/>
    <property type="match status" value="1"/>
</dbReference>
<dbReference type="HAMAP" id="MF_00188">
    <property type="entry name" value="Pept_M48_protease_HtpX"/>
    <property type="match status" value="1"/>
</dbReference>
<dbReference type="InterPro" id="IPR050083">
    <property type="entry name" value="HtpX_protease"/>
</dbReference>
<dbReference type="InterPro" id="IPR022919">
    <property type="entry name" value="Pept_M48_protease_HtpX"/>
</dbReference>
<dbReference type="InterPro" id="IPR001915">
    <property type="entry name" value="Peptidase_M48"/>
</dbReference>
<dbReference type="NCBIfam" id="NF003965">
    <property type="entry name" value="PRK05457.1"/>
    <property type="match status" value="1"/>
</dbReference>
<dbReference type="PANTHER" id="PTHR43221">
    <property type="entry name" value="PROTEASE HTPX"/>
    <property type="match status" value="1"/>
</dbReference>
<dbReference type="PANTHER" id="PTHR43221:SF1">
    <property type="entry name" value="PROTEASE HTPX"/>
    <property type="match status" value="1"/>
</dbReference>
<dbReference type="Pfam" id="PF01435">
    <property type="entry name" value="Peptidase_M48"/>
    <property type="match status" value="1"/>
</dbReference>
<proteinExistence type="inferred from homology"/>
<organism>
    <name type="scientific">Salmonella arizonae (strain ATCC BAA-731 / CDC346-86 / RSK2980)</name>
    <dbReference type="NCBI Taxonomy" id="41514"/>
    <lineage>
        <taxon>Bacteria</taxon>
        <taxon>Pseudomonadati</taxon>
        <taxon>Pseudomonadota</taxon>
        <taxon>Gammaproteobacteria</taxon>
        <taxon>Enterobacterales</taxon>
        <taxon>Enterobacteriaceae</taxon>
        <taxon>Salmonella</taxon>
    </lineage>
</organism>
<comment type="cofactor">
    <cofactor evidence="1">
        <name>Zn(2+)</name>
        <dbReference type="ChEBI" id="CHEBI:29105"/>
    </cofactor>
    <text evidence="1">Binds 1 zinc ion per subunit.</text>
</comment>
<comment type="subcellular location">
    <subcellularLocation>
        <location evidence="1">Cell inner membrane</location>
        <topology evidence="1">Multi-pass membrane protein</topology>
    </subcellularLocation>
</comment>
<comment type="similarity">
    <text evidence="1">Belongs to the peptidase M48B family.</text>
</comment>
<protein>
    <recommendedName>
        <fullName evidence="1">Protease HtpX</fullName>
        <ecNumber evidence="1">3.4.24.-</ecNumber>
    </recommendedName>
    <alternativeName>
        <fullName evidence="1">Heat shock protein HtpX</fullName>
    </alternativeName>
</protein>
<sequence>MMRIALFLLTNLAVMVVFGLVLSLTGIQSSSVQGLLIMALLFGFGGSFISLLMSKWMALKSVGGEVIEQPRNERERWLMNTVATQARQAGIAMPQVAIYHAPDINAFATGARRDASLVAVSTGLLQNMSPDEAEAVIAHEISHIANGDMVTMTLIQGVVNTFVIFISRIIAQIAAGFLGGNRDEGEGSNGNPLIYFAVATVLELVFGILASIITMWFSRYREFHADAGSAKLVGREKMIAALQRLKTSYEPQEATSMMAFCINGKSKSLSELFMTHPPLDKRIEALRSGEYLK</sequence>
<reference key="1">
    <citation type="submission" date="2007-11" db="EMBL/GenBank/DDBJ databases">
        <authorList>
            <consortium name="The Salmonella enterica serovar Arizonae Genome Sequencing Project"/>
            <person name="McClelland M."/>
            <person name="Sanderson E.K."/>
            <person name="Porwollik S."/>
            <person name="Spieth J."/>
            <person name="Clifton W.S."/>
            <person name="Fulton R."/>
            <person name="Chunyan W."/>
            <person name="Wollam A."/>
            <person name="Shah N."/>
            <person name="Pepin K."/>
            <person name="Bhonagiri V."/>
            <person name="Nash W."/>
            <person name="Johnson M."/>
            <person name="Thiruvilangam P."/>
            <person name="Wilson R."/>
        </authorList>
    </citation>
    <scope>NUCLEOTIDE SEQUENCE [LARGE SCALE GENOMIC DNA]</scope>
    <source>
        <strain>ATCC BAA-731 / CDC346-86 / RSK2980</strain>
    </source>
</reference>
<gene>
    <name evidence="1" type="primary">htpX</name>
    <name type="ordered locus">SARI_01097</name>
</gene>
<keyword id="KW-0997">Cell inner membrane</keyword>
<keyword id="KW-1003">Cell membrane</keyword>
<keyword id="KW-0378">Hydrolase</keyword>
<keyword id="KW-0472">Membrane</keyword>
<keyword id="KW-0479">Metal-binding</keyword>
<keyword id="KW-0482">Metalloprotease</keyword>
<keyword id="KW-0645">Protease</keyword>
<keyword id="KW-1185">Reference proteome</keyword>
<keyword id="KW-0812">Transmembrane</keyword>
<keyword id="KW-1133">Transmembrane helix</keyword>
<keyword id="KW-0862">Zinc</keyword>